<feature type="chain" id="PRO_0000206974" description="Exodeoxyribonuclease 7 small subunit">
    <location>
        <begin position="1"/>
        <end position="82"/>
    </location>
</feature>
<dbReference type="EC" id="3.1.11.6" evidence="1"/>
<dbReference type="EMBL" id="AE016958">
    <property type="protein sequence ID" value="AAS05004.1"/>
    <property type="molecule type" value="Genomic_DNA"/>
</dbReference>
<dbReference type="RefSeq" id="WP_003875383.1">
    <property type="nucleotide sequence ID" value="NZ_CP106873.1"/>
</dbReference>
<dbReference type="SMR" id="Q73WH3"/>
<dbReference type="STRING" id="262316.MAP_2687"/>
<dbReference type="KEGG" id="mpa:MAP_2687"/>
<dbReference type="eggNOG" id="COG1722">
    <property type="taxonomic scope" value="Bacteria"/>
</dbReference>
<dbReference type="HOGENOM" id="CLU_145918_0_2_11"/>
<dbReference type="Proteomes" id="UP000000580">
    <property type="component" value="Chromosome"/>
</dbReference>
<dbReference type="GO" id="GO:0005829">
    <property type="term" value="C:cytosol"/>
    <property type="evidence" value="ECO:0007669"/>
    <property type="project" value="TreeGrafter"/>
</dbReference>
<dbReference type="GO" id="GO:0009318">
    <property type="term" value="C:exodeoxyribonuclease VII complex"/>
    <property type="evidence" value="ECO:0007669"/>
    <property type="project" value="InterPro"/>
</dbReference>
<dbReference type="GO" id="GO:0008855">
    <property type="term" value="F:exodeoxyribonuclease VII activity"/>
    <property type="evidence" value="ECO:0007669"/>
    <property type="project" value="UniProtKB-UniRule"/>
</dbReference>
<dbReference type="GO" id="GO:0006308">
    <property type="term" value="P:DNA catabolic process"/>
    <property type="evidence" value="ECO:0007669"/>
    <property type="project" value="UniProtKB-UniRule"/>
</dbReference>
<dbReference type="FunFam" id="1.10.287.1040:FF:000004">
    <property type="entry name" value="Exodeoxyribonuclease 7 small subunit"/>
    <property type="match status" value="1"/>
</dbReference>
<dbReference type="Gene3D" id="1.10.287.1040">
    <property type="entry name" value="Exonuclease VII, small subunit"/>
    <property type="match status" value="1"/>
</dbReference>
<dbReference type="HAMAP" id="MF_00337">
    <property type="entry name" value="Exonuc_7_S"/>
    <property type="match status" value="1"/>
</dbReference>
<dbReference type="InterPro" id="IPR003761">
    <property type="entry name" value="Exonuc_VII_S"/>
</dbReference>
<dbReference type="InterPro" id="IPR037004">
    <property type="entry name" value="Exonuc_VII_ssu_sf"/>
</dbReference>
<dbReference type="NCBIfam" id="NF002139">
    <property type="entry name" value="PRK00977.1-3"/>
    <property type="match status" value="1"/>
</dbReference>
<dbReference type="NCBIfam" id="TIGR01280">
    <property type="entry name" value="xseB"/>
    <property type="match status" value="1"/>
</dbReference>
<dbReference type="PANTHER" id="PTHR34137">
    <property type="entry name" value="EXODEOXYRIBONUCLEASE 7 SMALL SUBUNIT"/>
    <property type="match status" value="1"/>
</dbReference>
<dbReference type="PANTHER" id="PTHR34137:SF1">
    <property type="entry name" value="EXODEOXYRIBONUCLEASE 7 SMALL SUBUNIT"/>
    <property type="match status" value="1"/>
</dbReference>
<dbReference type="Pfam" id="PF02609">
    <property type="entry name" value="Exonuc_VII_S"/>
    <property type="match status" value="1"/>
</dbReference>
<dbReference type="SUPFAM" id="SSF116842">
    <property type="entry name" value="XseB-like"/>
    <property type="match status" value="1"/>
</dbReference>
<keyword id="KW-0963">Cytoplasm</keyword>
<keyword id="KW-0269">Exonuclease</keyword>
<keyword id="KW-0378">Hydrolase</keyword>
<keyword id="KW-0540">Nuclease</keyword>
<keyword id="KW-1185">Reference proteome</keyword>
<organism>
    <name type="scientific">Mycolicibacterium paratuberculosis (strain ATCC BAA-968 / K-10)</name>
    <name type="common">Mycobacterium paratuberculosis</name>
    <dbReference type="NCBI Taxonomy" id="262316"/>
    <lineage>
        <taxon>Bacteria</taxon>
        <taxon>Bacillati</taxon>
        <taxon>Actinomycetota</taxon>
        <taxon>Actinomycetes</taxon>
        <taxon>Mycobacteriales</taxon>
        <taxon>Mycobacteriaceae</taxon>
        <taxon>Mycobacterium</taxon>
        <taxon>Mycobacterium avium complex (MAC)</taxon>
    </lineage>
</organism>
<name>EX7S_MYCPA</name>
<gene>
    <name evidence="1" type="primary">xseB</name>
    <name type="ordered locus">MAP_2687</name>
</gene>
<sequence>MANNKKDEQAAAATPISRLGYEACRDELIEVVRQLEQGGLDLDASLNLWERGEQLAKRCEEHLAGARKRIEDALAAGEADDD</sequence>
<protein>
    <recommendedName>
        <fullName evidence="1">Exodeoxyribonuclease 7 small subunit</fullName>
        <ecNumber evidence="1">3.1.11.6</ecNumber>
    </recommendedName>
    <alternativeName>
        <fullName evidence="1">Exodeoxyribonuclease VII small subunit</fullName>
        <shortName evidence="1">Exonuclease VII small subunit</shortName>
    </alternativeName>
</protein>
<accession>Q73WH3</accession>
<proteinExistence type="inferred from homology"/>
<evidence type="ECO:0000255" key="1">
    <source>
        <dbReference type="HAMAP-Rule" id="MF_00337"/>
    </source>
</evidence>
<reference key="1">
    <citation type="journal article" date="2005" name="Proc. Natl. Acad. Sci. U.S.A.">
        <title>The complete genome sequence of Mycobacterium avium subspecies paratuberculosis.</title>
        <authorList>
            <person name="Li L."/>
            <person name="Bannantine J.P."/>
            <person name="Zhang Q."/>
            <person name="Amonsin A."/>
            <person name="May B.J."/>
            <person name="Alt D."/>
            <person name="Banerji N."/>
            <person name="Kanjilal S."/>
            <person name="Kapur V."/>
        </authorList>
    </citation>
    <scope>NUCLEOTIDE SEQUENCE [LARGE SCALE GENOMIC DNA]</scope>
    <source>
        <strain>ATCC BAA-968 / K-10</strain>
    </source>
</reference>
<comment type="function">
    <text evidence="1">Bidirectionally degrades single-stranded DNA into large acid-insoluble oligonucleotides, which are then degraded further into small acid-soluble oligonucleotides.</text>
</comment>
<comment type="catalytic activity">
    <reaction evidence="1">
        <text>Exonucleolytic cleavage in either 5'- to 3'- or 3'- to 5'-direction to yield nucleoside 5'-phosphates.</text>
        <dbReference type="EC" id="3.1.11.6"/>
    </reaction>
</comment>
<comment type="subunit">
    <text evidence="1">Heterooligomer composed of large and small subunits.</text>
</comment>
<comment type="subcellular location">
    <subcellularLocation>
        <location evidence="1">Cytoplasm</location>
    </subcellularLocation>
</comment>
<comment type="similarity">
    <text evidence="1">Belongs to the XseB family.</text>
</comment>